<name>ATPD_YERPN</name>
<accession>Q1CCH2</accession>
<accession>D1Q304</accession>
<evidence type="ECO:0000255" key="1">
    <source>
        <dbReference type="HAMAP-Rule" id="MF_01416"/>
    </source>
</evidence>
<dbReference type="EMBL" id="CP000305">
    <property type="protein sequence ID" value="ABG20308.1"/>
    <property type="molecule type" value="Genomic_DNA"/>
</dbReference>
<dbReference type="EMBL" id="ACNQ01000019">
    <property type="protein sequence ID" value="EEO74907.1"/>
    <property type="molecule type" value="Genomic_DNA"/>
</dbReference>
<dbReference type="RefSeq" id="WP_002220760.1">
    <property type="nucleotide sequence ID" value="NZ_ACNQ01000019.1"/>
</dbReference>
<dbReference type="SMR" id="Q1CCH2"/>
<dbReference type="GeneID" id="57974600"/>
<dbReference type="KEGG" id="ypn:YPN_3981"/>
<dbReference type="HOGENOM" id="CLU_085114_3_0_6"/>
<dbReference type="Proteomes" id="UP000008936">
    <property type="component" value="Chromosome"/>
</dbReference>
<dbReference type="GO" id="GO:0005886">
    <property type="term" value="C:plasma membrane"/>
    <property type="evidence" value="ECO:0007669"/>
    <property type="project" value="UniProtKB-SubCell"/>
</dbReference>
<dbReference type="GO" id="GO:0045259">
    <property type="term" value="C:proton-transporting ATP synthase complex"/>
    <property type="evidence" value="ECO:0007669"/>
    <property type="project" value="UniProtKB-KW"/>
</dbReference>
<dbReference type="GO" id="GO:0046933">
    <property type="term" value="F:proton-transporting ATP synthase activity, rotational mechanism"/>
    <property type="evidence" value="ECO:0007669"/>
    <property type="project" value="UniProtKB-UniRule"/>
</dbReference>
<dbReference type="FunFam" id="1.10.520.20:FF:000001">
    <property type="entry name" value="ATP synthase subunit delta"/>
    <property type="match status" value="1"/>
</dbReference>
<dbReference type="Gene3D" id="1.10.520.20">
    <property type="entry name" value="N-terminal domain of the delta subunit of the F1F0-ATP synthase"/>
    <property type="match status" value="1"/>
</dbReference>
<dbReference type="HAMAP" id="MF_01416">
    <property type="entry name" value="ATP_synth_delta_bact"/>
    <property type="match status" value="1"/>
</dbReference>
<dbReference type="InterPro" id="IPR026015">
    <property type="entry name" value="ATP_synth_OSCP/delta_N_sf"/>
</dbReference>
<dbReference type="InterPro" id="IPR020781">
    <property type="entry name" value="ATPase_OSCP/d_CS"/>
</dbReference>
<dbReference type="InterPro" id="IPR000711">
    <property type="entry name" value="ATPase_OSCP/dsu"/>
</dbReference>
<dbReference type="NCBIfam" id="TIGR01145">
    <property type="entry name" value="ATP_synt_delta"/>
    <property type="match status" value="1"/>
</dbReference>
<dbReference type="NCBIfam" id="NF004402">
    <property type="entry name" value="PRK05758.2-2"/>
    <property type="match status" value="1"/>
</dbReference>
<dbReference type="NCBIfam" id="NF004404">
    <property type="entry name" value="PRK05758.2-5"/>
    <property type="match status" value="1"/>
</dbReference>
<dbReference type="PANTHER" id="PTHR11910">
    <property type="entry name" value="ATP SYNTHASE DELTA CHAIN"/>
    <property type="match status" value="1"/>
</dbReference>
<dbReference type="Pfam" id="PF00213">
    <property type="entry name" value="OSCP"/>
    <property type="match status" value="1"/>
</dbReference>
<dbReference type="PRINTS" id="PR00125">
    <property type="entry name" value="ATPASEDELTA"/>
</dbReference>
<dbReference type="SUPFAM" id="SSF47928">
    <property type="entry name" value="N-terminal domain of the delta subunit of the F1F0-ATP synthase"/>
    <property type="match status" value="1"/>
</dbReference>
<dbReference type="PROSITE" id="PS00389">
    <property type="entry name" value="ATPASE_DELTA"/>
    <property type="match status" value="1"/>
</dbReference>
<proteinExistence type="inferred from homology"/>
<comment type="function">
    <text evidence="1">F(1)F(0) ATP synthase produces ATP from ADP in the presence of a proton or sodium gradient. F-type ATPases consist of two structural domains, F(1) containing the extramembraneous catalytic core and F(0) containing the membrane proton channel, linked together by a central stalk and a peripheral stalk. During catalysis, ATP synthesis in the catalytic domain of F(1) is coupled via a rotary mechanism of the central stalk subunits to proton translocation.</text>
</comment>
<comment type="function">
    <text evidence="1">This protein is part of the stalk that links CF(0) to CF(1). It either transmits conformational changes from CF(0) to CF(1) or is implicated in proton conduction.</text>
</comment>
<comment type="subunit">
    <text evidence="1">F-type ATPases have 2 components, F(1) - the catalytic core - and F(0) - the membrane proton channel. F(1) has five subunits: alpha(3), beta(3), gamma(1), delta(1), epsilon(1). F(0) has three main subunits: a(1), b(2) and c(10-14). The alpha and beta chains form an alternating ring which encloses part of the gamma chain. F(1) is attached to F(0) by a central stalk formed by the gamma and epsilon chains, while a peripheral stalk is formed by the delta and b chains.</text>
</comment>
<comment type="subcellular location">
    <subcellularLocation>
        <location evidence="1">Cell inner membrane</location>
        <topology evidence="1">Peripheral membrane protein</topology>
    </subcellularLocation>
</comment>
<comment type="similarity">
    <text evidence="1">Belongs to the ATPase delta chain family.</text>
</comment>
<feature type="chain" id="PRO_0000371204" description="ATP synthase subunit delta">
    <location>
        <begin position="1"/>
        <end position="177"/>
    </location>
</feature>
<sequence>MSEFVTVARPYAKAAFDFAVEHQAVERWQNMLAFTAQVTRNEQIAELLSGAVAPETMSTTFIAVCGDQLDEPAQNFIRVMAENGRLLVLPEVLQQFIQLRASLESTVDVEVSSARALNDEQLAKIAAAMEKRLSRKVKLNCKIDKSVMAGVVIRAGDMVIDGSVRGRLERLADVLQS</sequence>
<reference key="1">
    <citation type="journal article" date="2006" name="J. Bacteriol.">
        <title>Complete genome sequence of Yersinia pestis strains Antiqua and Nepal516: evidence of gene reduction in an emerging pathogen.</title>
        <authorList>
            <person name="Chain P.S.G."/>
            <person name="Hu P."/>
            <person name="Malfatti S.A."/>
            <person name="Radnedge L."/>
            <person name="Larimer F."/>
            <person name="Vergez L.M."/>
            <person name="Worsham P."/>
            <person name="Chu M.C."/>
            <person name="Andersen G.L."/>
        </authorList>
    </citation>
    <scope>NUCLEOTIDE SEQUENCE [LARGE SCALE GENOMIC DNA]</scope>
    <source>
        <strain>Nepal516</strain>
    </source>
</reference>
<reference key="2">
    <citation type="submission" date="2009-04" db="EMBL/GenBank/DDBJ databases">
        <title>Yersinia pestis Nepal516A whole genome shotgun sequencing project.</title>
        <authorList>
            <person name="Plunkett G. III"/>
            <person name="Anderson B.D."/>
            <person name="Baumler D.J."/>
            <person name="Burland V."/>
            <person name="Cabot E.L."/>
            <person name="Glasner J.D."/>
            <person name="Mau B."/>
            <person name="Neeno-Eckwall E."/>
            <person name="Perna N.T."/>
            <person name="Munk A.C."/>
            <person name="Tapia R."/>
            <person name="Green L.D."/>
            <person name="Rogers Y.C."/>
            <person name="Detter J.C."/>
            <person name="Bruce D.C."/>
            <person name="Brettin T.S."/>
        </authorList>
    </citation>
    <scope>NUCLEOTIDE SEQUENCE [LARGE SCALE GENOMIC DNA]</scope>
    <source>
        <strain>Nepal516</strain>
    </source>
</reference>
<gene>
    <name evidence="1" type="primary">atpH</name>
    <name type="ordered locus">YPN_3981</name>
    <name type="ORF">YP516_4517</name>
</gene>
<protein>
    <recommendedName>
        <fullName evidence="1">ATP synthase subunit delta</fullName>
    </recommendedName>
    <alternativeName>
        <fullName evidence="1">ATP synthase F(1) sector subunit delta</fullName>
    </alternativeName>
    <alternativeName>
        <fullName evidence="1">F-type ATPase subunit delta</fullName>
        <shortName evidence="1">F-ATPase subunit delta</shortName>
    </alternativeName>
</protein>
<keyword id="KW-0066">ATP synthesis</keyword>
<keyword id="KW-0997">Cell inner membrane</keyword>
<keyword id="KW-1003">Cell membrane</keyword>
<keyword id="KW-0139">CF(1)</keyword>
<keyword id="KW-0375">Hydrogen ion transport</keyword>
<keyword id="KW-0406">Ion transport</keyword>
<keyword id="KW-0472">Membrane</keyword>
<keyword id="KW-0813">Transport</keyword>
<organism>
    <name type="scientific">Yersinia pestis bv. Antiqua (strain Nepal516)</name>
    <dbReference type="NCBI Taxonomy" id="377628"/>
    <lineage>
        <taxon>Bacteria</taxon>
        <taxon>Pseudomonadati</taxon>
        <taxon>Pseudomonadota</taxon>
        <taxon>Gammaproteobacteria</taxon>
        <taxon>Enterobacterales</taxon>
        <taxon>Yersiniaceae</taxon>
        <taxon>Yersinia</taxon>
    </lineage>
</organism>